<evidence type="ECO:0000250" key="1"/>
<evidence type="ECO:0000255" key="2">
    <source>
        <dbReference type="PROSITE-ProRule" id="PRU00718"/>
    </source>
</evidence>
<evidence type="ECO:0000269" key="3">
    <source>
    </source>
</evidence>
<evidence type="ECO:0000305" key="4"/>
<protein>
    <recommendedName>
        <fullName>Uncharacterized FAD-linked oxidoreductase YvdP</fullName>
        <ecNumber>1.21.-.-</ecNumber>
    </recommendedName>
    <alternativeName>
        <fullName>Spore coat protein YvdP</fullName>
    </alternativeName>
</protein>
<feature type="chain" id="PRO_0000360487" description="Uncharacterized FAD-linked oxidoreductase YvdP">
    <location>
        <begin position="1"/>
        <end position="447"/>
    </location>
</feature>
<feature type="domain" description="FAD-binding PCMH-type" evidence="2">
    <location>
        <begin position="29"/>
        <end position="201"/>
    </location>
</feature>
<gene>
    <name type="primary">yvdP</name>
    <name type="ordered locus">BSU34520</name>
</gene>
<dbReference type="EC" id="1.21.-.-"/>
<dbReference type="EMBL" id="Z94043">
    <property type="protein sequence ID" value="CAB08045.1"/>
    <property type="molecule type" value="Genomic_DNA"/>
</dbReference>
<dbReference type="EMBL" id="AL009126">
    <property type="protein sequence ID" value="CAB15457.1"/>
    <property type="molecule type" value="Genomic_DNA"/>
</dbReference>
<dbReference type="PIR" id="G70034">
    <property type="entry name" value="G70034"/>
</dbReference>
<dbReference type="RefSeq" id="WP_003228217.1">
    <property type="nucleotide sequence ID" value="NZ_OZ025638.1"/>
</dbReference>
<dbReference type="SMR" id="O06997"/>
<dbReference type="FunCoup" id="O06997">
    <property type="interactions" value="109"/>
</dbReference>
<dbReference type="IntAct" id="O06997">
    <property type="interactions" value="2"/>
</dbReference>
<dbReference type="STRING" id="224308.BSU34520"/>
<dbReference type="PaxDb" id="224308-BSU34520"/>
<dbReference type="EnsemblBacteria" id="CAB15457">
    <property type="protein sequence ID" value="CAB15457"/>
    <property type="gene ID" value="BSU_34520"/>
</dbReference>
<dbReference type="GeneID" id="936442"/>
<dbReference type="KEGG" id="bsu:BSU34520"/>
<dbReference type="PATRIC" id="fig|224308.179.peg.3739"/>
<dbReference type="eggNOG" id="COG0277">
    <property type="taxonomic scope" value="Bacteria"/>
</dbReference>
<dbReference type="InParanoid" id="O06997"/>
<dbReference type="OrthoDB" id="545125at2"/>
<dbReference type="PhylomeDB" id="O06997"/>
<dbReference type="BioCyc" id="BSUB:BSU34520-MONOMER"/>
<dbReference type="Proteomes" id="UP000001570">
    <property type="component" value="Chromosome"/>
</dbReference>
<dbReference type="GO" id="GO:0071949">
    <property type="term" value="F:FAD binding"/>
    <property type="evidence" value="ECO:0007669"/>
    <property type="project" value="InterPro"/>
</dbReference>
<dbReference type="GO" id="GO:0016491">
    <property type="term" value="F:oxidoreductase activity"/>
    <property type="evidence" value="ECO:0007669"/>
    <property type="project" value="UniProtKB-KW"/>
</dbReference>
<dbReference type="GO" id="GO:0030435">
    <property type="term" value="P:sporulation resulting in formation of a cellular spore"/>
    <property type="evidence" value="ECO:0007669"/>
    <property type="project" value="UniProtKB-KW"/>
</dbReference>
<dbReference type="Gene3D" id="3.30.465.10">
    <property type="match status" value="1"/>
</dbReference>
<dbReference type="Gene3D" id="3.40.462.20">
    <property type="match status" value="1"/>
</dbReference>
<dbReference type="Gene3D" id="3.30.43.10">
    <property type="entry name" value="Uridine Diphospho-n-acetylenolpyruvylglucosamine Reductase, domain 2"/>
    <property type="match status" value="1"/>
</dbReference>
<dbReference type="InterPro" id="IPR012951">
    <property type="entry name" value="BBE"/>
</dbReference>
<dbReference type="InterPro" id="IPR016166">
    <property type="entry name" value="FAD-bd_PCMH"/>
</dbReference>
<dbReference type="InterPro" id="IPR036318">
    <property type="entry name" value="FAD-bd_PCMH-like_sf"/>
</dbReference>
<dbReference type="InterPro" id="IPR016167">
    <property type="entry name" value="FAD-bd_PCMH_sub1"/>
</dbReference>
<dbReference type="InterPro" id="IPR016169">
    <property type="entry name" value="FAD-bd_PCMH_sub2"/>
</dbReference>
<dbReference type="InterPro" id="IPR050416">
    <property type="entry name" value="FAD-linked_Oxidoreductase"/>
</dbReference>
<dbReference type="InterPro" id="IPR006094">
    <property type="entry name" value="Oxid_FAD_bind_N"/>
</dbReference>
<dbReference type="PANTHER" id="PTHR42973">
    <property type="entry name" value="BINDING OXIDOREDUCTASE, PUTATIVE (AFU_ORTHOLOGUE AFUA_1G17690)-RELATED"/>
    <property type="match status" value="1"/>
</dbReference>
<dbReference type="PANTHER" id="PTHR42973:SF39">
    <property type="entry name" value="FAD-BINDING PCMH-TYPE DOMAIN-CONTAINING PROTEIN"/>
    <property type="match status" value="1"/>
</dbReference>
<dbReference type="Pfam" id="PF08031">
    <property type="entry name" value="BBE"/>
    <property type="match status" value="1"/>
</dbReference>
<dbReference type="Pfam" id="PF01565">
    <property type="entry name" value="FAD_binding_4"/>
    <property type="match status" value="1"/>
</dbReference>
<dbReference type="SUPFAM" id="SSF56176">
    <property type="entry name" value="FAD-binding/transporter-associated domain-like"/>
    <property type="match status" value="1"/>
</dbReference>
<dbReference type="PROSITE" id="PS51387">
    <property type="entry name" value="FAD_PCMH"/>
    <property type="match status" value="1"/>
</dbReference>
<comment type="cofactor">
    <cofactor evidence="1">
        <name>FAD</name>
        <dbReference type="ChEBI" id="CHEBI:57692"/>
    </cofactor>
</comment>
<comment type="subcellular location">
    <subcellularLocation>
        <location evidence="3">Spore coat</location>
    </subcellularLocation>
</comment>
<comment type="similarity">
    <text evidence="4">Belongs to the oxygen-dependent FAD-linked oxidoreductase family.</text>
</comment>
<name>YVDP_BACSU</name>
<proteinExistence type="evidence at protein level"/>
<organism>
    <name type="scientific">Bacillus subtilis (strain 168)</name>
    <dbReference type="NCBI Taxonomy" id="224308"/>
    <lineage>
        <taxon>Bacteria</taxon>
        <taxon>Bacillati</taxon>
        <taxon>Bacillota</taxon>
        <taxon>Bacilli</taxon>
        <taxon>Bacillales</taxon>
        <taxon>Bacillaceae</taxon>
        <taxon>Bacillus</taxon>
    </lineage>
</organism>
<accession>O06997</accession>
<accession>Q795H3</accession>
<keyword id="KW-0274">FAD</keyword>
<keyword id="KW-0285">Flavoprotein</keyword>
<keyword id="KW-0560">Oxidoreductase</keyword>
<keyword id="KW-1185">Reference proteome</keyword>
<keyword id="KW-0749">Sporulation</keyword>
<sequence>MGSTQLTGRVIFKGDPGYTEAIKNWNPYVDVYPLVFVFAQNSYDVSNAIKWARENKVPLRVRSGRHALDKNLSVVSGGIVIDVSDMNKVFLDEENAIATVQTGIPVGPLVKGLARDGFMAPFGDSPTVGIGGITMGGGFGVLSRSIGLISDNLLALKTVDAKGRIIHADQSHNEDLLWASRGGGGGNFGYNTQYTFKVHRAPKTATVFNIIWPWEQLETVFKAWQKWAPFVDERLGCYLEIYSKINGLCHAEGIFLGSKTELIRLLKPLLHAGTPTEADIKTLYYPDAIDFLDPDEPIPGRNDQSVKFSSAWGHDFWSDEPISIMRKFLEDATGTEANFFFINWGGAISRVPKDETAFFWRHPLFYTEWTASWKNKSQEDSNLASVERVRQLMQPYVAGSYVNVPDQNIENFGKEYYGANFARLREIKAKYDPENVFRFPQSIPPSR</sequence>
<reference key="1">
    <citation type="submission" date="1997-04" db="EMBL/GenBank/DDBJ databases">
        <authorList>
            <person name="Denizot F."/>
        </authorList>
    </citation>
    <scope>NUCLEOTIDE SEQUENCE [GENOMIC DNA]</scope>
</reference>
<reference key="2">
    <citation type="journal article" date="1997" name="Nature">
        <title>The complete genome sequence of the Gram-positive bacterium Bacillus subtilis.</title>
        <authorList>
            <person name="Kunst F."/>
            <person name="Ogasawara N."/>
            <person name="Moszer I."/>
            <person name="Albertini A.M."/>
            <person name="Alloni G."/>
            <person name="Azevedo V."/>
            <person name="Bertero M.G."/>
            <person name="Bessieres P."/>
            <person name="Bolotin A."/>
            <person name="Borchert S."/>
            <person name="Borriss R."/>
            <person name="Boursier L."/>
            <person name="Brans A."/>
            <person name="Braun M."/>
            <person name="Brignell S.C."/>
            <person name="Bron S."/>
            <person name="Brouillet S."/>
            <person name="Bruschi C.V."/>
            <person name="Caldwell B."/>
            <person name="Capuano V."/>
            <person name="Carter N.M."/>
            <person name="Choi S.-K."/>
            <person name="Codani J.-J."/>
            <person name="Connerton I.F."/>
            <person name="Cummings N.J."/>
            <person name="Daniel R.A."/>
            <person name="Denizot F."/>
            <person name="Devine K.M."/>
            <person name="Duesterhoeft A."/>
            <person name="Ehrlich S.D."/>
            <person name="Emmerson P.T."/>
            <person name="Entian K.-D."/>
            <person name="Errington J."/>
            <person name="Fabret C."/>
            <person name="Ferrari E."/>
            <person name="Foulger D."/>
            <person name="Fritz C."/>
            <person name="Fujita M."/>
            <person name="Fujita Y."/>
            <person name="Fuma S."/>
            <person name="Galizzi A."/>
            <person name="Galleron N."/>
            <person name="Ghim S.-Y."/>
            <person name="Glaser P."/>
            <person name="Goffeau A."/>
            <person name="Golightly E.J."/>
            <person name="Grandi G."/>
            <person name="Guiseppi G."/>
            <person name="Guy B.J."/>
            <person name="Haga K."/>
            <person name="Haiech J."/>
            <person name="Harwood C.R."/>
            <person name="Henaut A."/>
            <person name="Hilbert H."/>
            <person name="Holsappel S."/>
            <person name="Hosono S."/>
            <person name="Hullo M.-F."/>
            <person name="Itaya M."/>
            <person name="Jones L.-M."/>
            <person name="Joris B."/>
            <person name="Karamata D."/>
            <person name="Kasahara Y."/>
            <person name="Klaerr-Blanchard M."/>
            <person name="Klein C."/>
            <person name="Kobayashi Y."/>
            <person name="Koetter P."/>
            <person name="Koningstein G."/>
            <person name="Krogh S."/>
            <person name="Kumano M."/>
            <person name="Kurita K."/>
            <person name="Lapidus A."/>
            <person name="Lardinois S."/>
            <person name="Lauber J."/>
            <person name="Lazarevic V."/>
            <person name="Lee S.-M."/>
            <person name="Levine A."/>
            <person name="Liu H."/>
            <person name="Masuda S."/>
            <person name="Mauel C."/>
            <person name="Medigue C."/>
            <person name="Medina N."/>
            <person name="Mellado R.P."/>
            <person name="Mizuno M."/>
            <person name="Moestl D."/>
            <person name="Nakai S."/>
            <person name="Noback M."/>
            <person name="Noone D."/>
            <person name="O'Reilly M."/>
            <person name="Ogawa K."/>
            <person name="Ogiwara A."/>
            <person name="Oudega B."/>
            <person name="Park S.-H."/>
            <person name="Parro V."/>
            <person name="Pohl T.M."/>
            <person name="Portetelle D."/>
            <person name="Porwollik S."/>
            <person name="Prescott A.M."/>
            <person name="Presecan E."/>
            <person name="Pujic P."/>
            <person name="Purnelle B."/>
            <person name="Rapoport G."/>
            <person name="Rey M."/>
            <person name="Reynolds S."/>
            <person name="Rieger M."/>
            <person name="Rivolta C."/>
            <person name="Rocha E."/>
            <person name="Roche B."/>
            <person name="Rose M."/>
            <person name="Sadaie Y."/>
            <person name="Sato T."/>
            <person name="Scanlan E."/>
            <person name="Schleich S."/>
            <person name="Schroeter R."/>
            <person name="Scoffone F."/>
            <person name="Sekiguchi J."/>
            <person name="Sekowska A."/>
            <person name="Seror S.J."/>
            <person name="Serror P."/>
            <person name="Shin B.-S."/>
            <person name="Soldo B."/>
            <person name="Sorokin A."/>
            <person name="Tacconi E."/>
            <person name="Takagi T."/>
            <person name="Takahashi H."/>
            <person name="Takemaru K."/>
            <person name="Takeuchi M."/>
            <person name="Tamakoshi A."/>
            <person name="Tanaka T."/>
            <person name="Terpstra P."/>
            <person name="Tognoni A."/>
            <person name="Tosato V."/>
            <person name="Uchiyama S."/>
            <person name="Vandenbol M."/>
            <person name="Vannier F."/>
            <person name="Vassarotti A."/>
            <person name="Viari A."/>
            <person name="Wambutt R."/>
            <person name="Wedler E."/>
            <person name="Wedler H."/>
            <person name="Weitzenegger T."/>
            <person name="Winters P."/>
            <person name="Wipat A."/>
            <person name="Yamamoto H."/>
            <person name="Yamane K."/>
            <person name="Yasumoto K."/>
            <person name="Yata K."/>
            <person name="Yoshida K."/>
            <person name="Yoshikawa H.-F."/>
            <person name="Zumstein E."/>
            <person name="Yoshikawa H."/>
            <person name="Danchin A."/>
        </authorList>
    </citation>
    <scope>NUCLEOTIDE SEQUENCE [LARGE SCALE GENOMIC DNA]</scope>
    <source>
        <strain>168</strain>
    </source>
</reference>
<reference key="3">
    <citation type="journal article" date="2003" name="J. Bacteriol.">
        <title>Proteomic analysis of the spore coats of Bacillus subtilis and Bacillus anthracis.</title>
        <authorList>
            <person name="Lai E.-M."/>
            <person name="Phadke N.D."/>
            <person name="Kachman M.T."/>
            <person name="Giorno R."/>
            <person name="Vazquez S."/>
            <person name="Vazquez J.A."/>
            <person name="Maddock J.R."/>
            <person name="Driks A."/>
        </authorList>
    </citation>
    <scope>IDENTIFICATION BY MASS SPECTROMETRY</scope>
    <scope>SUBCELLULAR LOCATION</scope>
</reference>